<sequence length="545" mass="57071">MSGAAVFVDAVVAPLGDAVGAIGFGAAAALGYRNYRDTDAEAAFWMAFTFASLLGVTWTVSLMLEKAGVATQIFNLATGPLMATTVAVFAIGGTATLAIVEDMEALVEERAQRRQEAEEERAEAERAREKAEQKQAEAERQTAEAESAKQDARERSAEIEQLAADLESQATEVGATLEAASDGDLTARVDATTDNAEIAEVATVVNDMLTTMERTIDEIQGFSTNVTTASREATAGAKEIQDASQTVSESVQEIAAGTDDQREQLESVAEEMDSYSATVEEVAATAQSVADTAADTTDVATAGKQTAEDAIDAIDAVQETMQTTVANVDALEDLTTEIDDIAELISDIAEQTNMLALNANIEAARAGSGGGSNGDGFAVVADEVKELATESQRSAKDIAELIEEVQSQTATTVEEIRVAEQRVNDGAAAVEETVDAFGAVTENIQETTDGVQEISQAMDEQAQRSERVVSSVDDIATISQATADRAENVSAASEEQTASITEVTSSLQSLAAQADTLEDRLNEFRTEATGTAHGEATDAPAGQSD</sequence>
<reference key="1">
    <citation type="journal article" date="1996" name="FEMS Microbiol. Lett.">
        <title>A family of halobacterial transducer proteins.</title>
        <authorList>
            <person name="Rudolph J."/>
            <person name="Nordmann B."/>
            <person name="Storch K.F."/>
            <person name="Gruenberg H."/>
            <person name="Rodewald K."/>
            <person name="Oesterhelt D."/>
        </authorList>
    </citation>
    <scope>NUCLEOTIDE SEQUENCE [GENOMIC DNA]</scope>
    <scope>FUNCTION</scope>
    <source>
        <strain>R1 / S9</strain>
    </source>
</reference>
<reference key="2">
    <citation type="journal article" date="2008" name="Genomics">
        <title>Evolution in the laboratory: the genome of Halobacterium salinarum strain R1 compared to that of strain NRC-1.</title>
        <authorList>
            <person name="Pfeiffer F."/>
            <person name="Schuster S.C."/>
            <person name="Broicher A."/>
            <person name="Falb M."/>
            <person name="Palm P."/>
            <person name="Rodewald K."/>
            <person name="Ruepp A."/>
            <person name="Soppa J."/>
            <person name="Tittor J."/>
            <person name="Oesterhelt D."/>
        </authorList>
    </citation>
    <scope>NUCLEOTIDE SEQUENCE [LARGE SCALE GENOMIC DNA]</scope>
    <source>
        <strain>ATCC 29341 / DSM 671 / R1</strain>
    </source>
</reference>
<reference key="3">
    <citation type="journal article" date="2008" name="J. Mol. Biol.">
        <title>Physiological sites of deamidation and methyl esterification in sensory transducers of Halobacterium salinarum.</title>
        <authorList>
            <person name="Koch M.K."/>
            <person name="Staudinger W.F."/>
            <person name="Siedler F."/>
            <person name="Oesterhelt D."/>
        </authorList>
    </citation>
    <scope>METHYLATION AT GLU-281</scope>
    <source>
        <strain>R1 / S9</strain>
    </source>
</reference>
<evidence type="ECO:0000255" key="1"/>
<evidence type="ECO:0000255" key="2">
    <source>
        <dbReference type="PROSITE-ProRule" id="PRU00102"/>
    </source>
</evidence>
<evidence type="ECO:0000255" key="3">
    <source>
        <dbReference type="PROSITE-ProRule" id="PRU00284"/>
    </source>
</evidence>
<evidence type="ECO:0000256" key="4">
    <source>
        <dbReference type="SAM" id="MobiDB-lite"/>
    </source>
</evidence>
<evidence type="ECO:0000269" key="5">
    <source>
    </source>
</evidence>
<evidence type="ECO:0000269" key="6">
    <source>
    </source>
</evidence>
<evidence type="ECO:0000305" key="7"/>
<organism>
    <name type="scientific">Halobacterium salinarum (strain ATCC 29341 / DSM 671 / R1)</name>
    <dbReference type="NCBI Taxonomy" id="478009"/>
    <lineage>
        <taxon>Archaea</taxon>
        <taxon>Methanobacteriati</taxon>
        <taxon>Methanobacteriota</taxon>
        <taxon>Stenosarchaea group</taxon>
        <taxon>Halobacteria</taxon>
        <taxon>Halobacteriales</taxon>
        <taxon>Halobacteriaceae</taxon>
        <taxon>Halobacterium</taxon>
        <taxon>Halobacterium salinarum NRC-34001</taxon>
    </lineage>
</organism>
<protein>
    <recommendedName>
        <fullName>Transducer protein Htr7</fullName>
    </recommendedName>
</protein>
<comment type="function">
    <text evidence="6">Potentially involved in chemo- or phototactic signal transduction.</text>
</comment>
<comment type="subcellular location">
    <subcellularLocation>
        <location evidence="7">Cell membrane</location>
        <topology evidence="7">Multi-pass membrane protein</topology>
    </subcellularLocation>
</comment>
<comment type="PTM">
    <text evidence="5">Methylated by CheR.</text>
</comment>
<comment type="similarity">
    <text evidence="7">Belongs to the methyl-accepting chemotaxis (MCP) protein family.</text>
</comment>
<keyword id="KW-1003">Cell membrane</keyword>
<keyword id="KW-0145">Chemotaxis</keyword>
<keyword id="KW-0472">Membrane</keyword>
<keyword id="KW-0488">Methylation</keyword>
<keyword id="KW-0807">Transducer</keyword>
<keyword id="KW-0812">Transmembrane</keyword>
<keyword id="KW-1133">Transmembrane helix</keyword>
<gene>
    <name type="primary">htr7</name>
    <name type="synonym">htrVII</name>
    <name type="ordered locus">OE_3473F</name>
</gene>
<feature type="chain" id="PRO_0000429077" description="Transducer protein Htr7">
    <location>
        <begin position="1"/>
        <end position="545"/>
    </location>
</feature>
<feature type="transmembrane region" description="Helical" evidence="1">
    <location>
        <begin position="10"/>
        <end position="30"/>
    </location>
</feature>
<feature type="transmembrane region" description="Helical" evidence="1">
    <location>
        <begin position="44"/>
        <end position="64"/>
    </location>
</feature>
<feature type="transmembrane region" description="Helical" evidence="1">
    <location>
        <begin position="80"/>
        <end position="100"/>
    </location>
</feature>
<feature type="domain" description="HAMP" evidence="2">
    <location>
        <begin position="164"/>
        <end position="217"/>
    </location>
</feature>
<feature type="domain" description="Methyl-accepting transducer" evidence="3">
    <location>
        <begin position="236"/>
        <end position="476"/>
    </location>
</feature>
<feature type="region of interest" description="Disordered" evidence="4">
    <location>
        <begin position="111"/>
        <end position="157"/>
    </location>
</feature>
<feature type="region of interest" description="Disordered" evidence="4">
    <location>
        <begin position="521"/>
        <end position="545"/>
    </location>
</feature>
<feature type="compositionally biased region" description="Basic and acidic residues" evidence="4">
    <location>
        <begin position="123"/>
        <end position="157"/>
    </location>
</feature>
<feature type="compositionally biased region" description="Low complexity" evidence="4">
    <location>
        <begin position="527"/>
        <end position="539"/>
    </location>
</feature>
<feature type="modified residue" description="Glutamate methyl ester (Glu)" evidence="5">
    <location>
        <position position="281"/>
    </location>
</feature>
<dbReference type="EMBL" id="X95589">
    <property type="protein sequence ID" value="CAA64842.1"/>
    <property type="molecule type" value="Genomic_DNA"/>
</dbReference>
<dbReference type="EMBL" id="AM774415">
    <property type="protein sequence ID" value="CAP14275.1"/>
    <property type="molecule type" value="Genomic_DNA"/>
</dbReference>
<dbReference type="PIR" id="T46811">
    <property type="entry name" value="T46811"/>
</dbReference>
<dbReference type="RefSeq" id="WP_010903283.1">
    <property type="nucleotide sequence ID" value="NC_010364.1"/>
</dbReference>
<dbReference type="SMR" id="B0R6A6"/>
<dbReference type="EnsemblBacteria" id="CAP14275">
    <property type="protein sequence ID" value="CAP14275"/>
    <property type="gene ID" value="OE_3473F"/>
</dbReference>
<dbReference type="GeneID" id="89343079"/>
<dbReference type="KEGG" id="hsl:OE_3473F"/>
<dbReference type="HOGENOM" id="CLU_000445_107_18_2"/>
<dbReference type="PhylomeDB" id="B0R6A6"/>
<dbReference type="Proteomes" id="UP000001321">
    <property type="component" value="Chromosome"/>
</dbReference>
<dbReference type="GO" id="GO:0005886">
    <property type="term" value="C:plasma membrane"/>
    <property type="evidence" value="ECO:0007669"/>
    <property type="project" value="UniProtKB-SubCell"/>
</dbReference>
<dbReference type="GO" id="GO:0004888">
    <property type="term" value="F:transmembrane signaling receptor activity"/>
    <property type="evidence" value="ECO:0007669"/>
    <property type="project" value="InterPro"/>
</dbReference>
<dbReference type="GO" id="GO:0006935">
    <property type="term" value="P:chemotaxis"/>
    <property type="evidence" value="ECO:0007669"/>
    <property type="project" value="UniProtKB-KW"/>
</dbReference>
<dbReference type="GO" id="GO:0007165">
    <property type="term" value="P:signal transduction"/>
    <property type="evidence" value="ECO:0007669"/>
    <property type="project" value="UniProtKB-KW"/>
</dbReference>
<dbReference type="CDD" id="cd11386">
    <property type="entry name" value="MCP_signal"/>
    <property type="match status" value="1"/>
</dbReference>
<dbReference type="Gene3D" id="1.10.287.950">
    <property type="entry name" value="Methyl-accepting chemotaxis protein"/>
    <property type="match status" value="1"/>
</dbReference>
<dbReference type="InterPro" id="IPR004090">
    <property type="entry name" value="Chemotax_Me-accpt_rcpt"/>
</dbReference>
<dbReference type="InterPro" id="IPR003660">
    <property type="entry name" value="HAMP_dom"/>
</dbReference>
<dbReference type="InterPro" id="IPR004089">
    <property type="entry name" value="MCPsignal_dom"/>
</dbReference>
<dbReference type="PANTHER" id="PTHR32089:SF112">
    <property type="entry name" value="LYSOZYME-LIKE PROTEIN-RELATED"/>
    <property type="match status" value="1"/>
</dbReference>
<dbReference type="PANTHER" id="PTHR32089">
    <property type="entry name" value="METHYL-ACCEPTING CHEMOTAXIS PROTEIN MCPB"/>
    <property type="match status" value="1"/>
</dbReference>
<dbReference type="Pfam" id="PF00015">
    <property type="entry name" value="MCPsignal"/>
    <property type="match status" value="1"/>
</dbReference>
<dbReference type="PRINTS" id="PR00260">
    <property type="entry name" value="CHEMTRNSDUCR"/>
</dbReference>
<dbReference type="SMART" id="SM00304">
    <property type="entry name" value="HAMP"/>
    <property type="match status" value="1"/>
</dbReference>
<dbReference type="SMART" id="SM00283">
    <property type="entry name" value="MA"/>
    <property type="match status" value="1"/>
</dbReference>
<dbReference type="SUPFAM" id="SSF58104">
    <property type="entry name" value="Methyl-accepting chemotaxis protein (MCP) signaling domain"/>
    <property type="match status" value="1"/>
</dbReference>
<dbReference type="PROSITE" id="PS50111">
    <property type="entry name" value="CHEMOTAXIS_TRANSDUC_2"/>
    <property type="match status" value="1"/>
</dbReference>
<dbReference type="PROSITE" id="PS50885">
    <property type="entry name" value="HAMP"/>
    <property type="match status" value="1"/>
</dbReference>
<proteinExistence type="evidence at protein level"/>
<accession>B0R6A6</accession>
<accession>Q48318</accession>
<accession>Q9HP85</accession>
<name>HTR7_HALS3</name>